<evidence type="ECO:0000250" key="1"/>
<evidence type="ECO:0000305" key="2"/>
<reference key="1">
    <citation type="journal article" date="2000" name="FEMS Microbiol. Lett.">
        <title>Characterization of the Leptospira interrogans S10-spc-alpha operon.</title>
        <authorList>
            <person name="Zuerner R.L."/>
            <person name="Hartskeerl R.A."/>
            <person name="van de Kemp H."/>
            <person name="Bal A.E."/>
        </authorList>
    </citation>
    <scope>NUCLEOTIDE SEQUENCE [GENOMIC DNA]</scope>
    <source>
        <strain>Lai / Serogroup Icterohaemorrhagiae / Serovar lai</strain>
    </source>
</reference>
<reference key="2">
    <citation type="journal article" date="2003" name="Nature">
        <title>Unique physiological and pathogenic features of Leptospira interrogans revealed by whole-genome sequencing.</title>
        <authorList>
            <person name="Ren S.-X."/>
            <person name="Fu G."/>
            <person name="Jiang X.-G."/>
            <person name="Zeng R."/>
            <person name="Miao Y.-G."/>
            <person name="Xu H."/>
            <person name="Zhang Y.-X."/>
            <person name="Xiong H."/>
            <person name="Lu G."/>
            <person name="Lu L.-F."/>
            <person name="Jiang H.-Q."/>
            <person name="Jia J."/>
            <person name="Tu Y.-F."/>
            <person name="Jiang J.-X."/>
            <person name="Gu W.-Y."/>
            <person name="Zhang Y.-Q."/>
            <person name="Cai Z."/>
            <person name="Sheng H.-H."/>
            <person name="Yin H.-F."/>
            <person name="Zhang Y."/>
            <person name="Zhu G.-F."/>
            <person name="Wan M."/>
            <person name="Huang H.-L."/>
            <person name="Qian Z."/>
            <person name="Wang S.-Y."/>
            <person name="Ma W."/>
            <person name="Yao Z.-J."/>
            <person name="Shen Y."/>
            <person name="Qiang B.-Q."/>
            <person name="Xia Q.-C."/>
            <person name="Guo X.-K."/>
            <person name="Danchin A."/>
            <person name="Saint Girons I."/>
            <person name="Somerville R.L."/>
            <person name="Wen Y.-M."/>
            <person name="Shi M.-H."/>
            <person name="Chen Z."/>
            <person name="Xu J.-G."/>
            <person name="Zhao G.-P."/>
        </authorList>
    </citation>
    <scope>NUCLEOTIDE SEQUENCE [LARGE SCALE GENOMIC DNA]</scope>
    <source>
        <strain>56601</strain>
    </source>
</reference>
<sequence>MARSVKKGPFIDDHLMKKITKLNSENQKKPFKTWSRRSTIFPDMVGHTVMVHNGKQFTPVYINENMIGHKLGEFSPTRTFRGHVAGDKKAAKK</sequence>
<organism>
    <name type="scientific">Leptospira interrogans serogroup Icterohaemorrhagiae serovar Lai (strain 56601)</name>
    <dbReference type="NCBI Taxonomy" id="189518"/>
    <lineage>
        <taxon>Bacteria</taxon>
        <taxon>Pseudomonadati</taxon>
        <taxon>Spirochaetota</taxon>
        <taxon>Spirochaetia</taxon>
        <taxon>Leptospirales</taxon>
        <taxon>Leptospiraceae</taxon>
        <taxon>Leptospira</taxon>
    </lineage>
</organism>
<proteinExistence type="inferred from homology"/>
<protein>
    <recommendedName>
        <fullName evidence="2">Small ribosomal subunit protein uS19</fullName>
    </recommendedName>
    <alternativeName>
        <fullName>30S ribosomal protein S19</fullName>
    </alternativeName>
</protein>
<keyword id="KW-1185">Reference proteome</keyword>
<keyword id="KW-0687">Ribonucleoprotein</keyword>
<keyword id="KW-0689">Ribosomal protein</keyword>
<keyword id="KW-0694">RNA-binding</keyword>
<keyword id="KW-0699">rRNA-binding</keyword>
<comment type="function">
    <text evidence="1">Protein S19 forms a complex with S13 that binds strongly to the 16S ribosomal RNA.</text>
</comment>
<comment type="similarity">
    <text evidence="2">Belongs to the universal ribosomal protein uS19 family.</text>
</comment>
<feature type="chain" id="PRO_0000129843" description="Small ribosomal subunit protein uS19">
    <location>
        <begin position="1"/>
        <end position="93"/>
    </location>
</feature>
<name>RS19_LEPIN</name>
<gene>
    <name type="primary">rpsS</name>
    <name type="ordered locus">LA_0743</name>
</gene>
<accession>Q9XD32</accession>
<dbReference type="EMBL" id="AF115283">
    <property type="protein sequence ID" value="AAD40587.1"/>
    <property type="molecule type" value="Genomic_DNA"/>
</dbReference>
<dbReference type="EMBL" id="AE010300">
    <property type="protein sequence ID" value="AAN47942.1"/>
    <property type="molecule type" value="Genomic_DNA"/>
</dbReference>
<dbReference type="RefSeq" id="NP_710924.1">
    <property type="nucleotide sequence ID" value="NC_004342.2"/>
</dbReference>
<dbReference type="RefSeq" id="WP_000124500.1">
    <property type="nucleotide sequence ID" value="NC_004342.2"/>
</dbReference>
<dbReference type="SMR" id="Q9XD32"/>
<dbReference type="FunCoup" id="Q9XD32">
    <property type="interactions" value="487"/>
</dbReference>
<dbReference type="STRING" id="189518.LA_0743"/>
<dbReference type="PaxDb" id="189518-LA_0743"/>
<dbReference type="EnsemblBacteria" id="AAN47942">
    <property type="protein sequence ID" value="AAN47942"/>
    <property type="gene ID" value="LA_0743"/>
</dbReference>
<dbReference type="GeneID" id="61172954"/>
<dbReference type="KEGG" id="lil:LA_0743"/>
<dbReference type="PATRIC" id="fig|189518.3.peg.749"/>
<dbReference type="HOGENOM" id="CLU_144911_0_1_12"/>
<dbReference type="InParanoid" id="Q9XD32"/>
<dbReference type="OrthoDB" id="9797833at2"/>
<dbReference type="PRO" id="PR:Q9XD32"/>
<dbReference type="Proteomes" id="UP000001408">
    <property type="component" value="Chromosome I"/>
</dbReference>
<dbReference type="GO" id="GO:0005737">
    <property type="term" value="C:cytoplasm"/>
    <property type="evidence" value="ECO:0007669"/>
    <property type="project" value="UniProtKB-ARBA"/>
</dbReference>
<dbReference type="GO" id="GO:0015935">
    <property type="term" value="C:small ribosomal subunit"/>
    <property type="evidence" value="ECO:0007669"/>
    <property type="project" value="InterPro"/>
</dbReference>
<dbReference type="GO" id="GO:0019843">
    <property type="term" value="F:rRNA binding"/>
    <property type="evidence" value="ECO:0007669"/>
    <property type="project" value="UniProtKB-UniRule"/>
</dbReference>
<dbReference type="GO" id="GO:0003735">
    <property type="term" value="F:structural constituent of ribosome"/>
    <property type="evidence" value="ECO:0000318"/>
    <property type="project" value="GO_Central"/>
</dbReference>
<dbReference type="GO" id="GO:0000028">
    <property type="term" value="P:ribosomal small subunit assembly"/>
    <property type="evidence" value="ECO:0000318"/>
    <property type="project" value="GO_Central"/>
</dbReference>
<dbReference type="GO" id="GO:0006412">
    <property type="term" value="P:translation"/>
    <property type="evidence" value="ECO:0007669"/>
    <property type="project" value="UniProtKB-UniRule"/>
</dbReference>
<dbReference type="FunFam" id="3.30.860.10:FF:000001">
    <property type="entry name" value="30S ribosomal protein S19"/>
    <property type="match status" value="1"/>
</dbReference>
<dbReference type="Gene3D" id="3.30.860.10">
    <property type="entry name" value="30s Ribosomal Protein S19, Chain A"/>
    <property type="match status" value="1"/>
</dbReference>
<dbReference type="HAMAP" id="MF_00531">
    <property type="entry name" value="Ribosomal_uS19"/>
    <property type="match status" value="1"/>
</dbReference>
<dbReference type="InterPro" id="IPR002222">
    <property type="entry name" value="Ribosomal_uS19"/>
</dbReference>
<dbReference type="InterPro" id="IPR005732">
    <property type="entry name" value="Ribosomal_uS19_bac-type"/>
</dbReference>
<dbReference type="InterPro" id="IPR020934">
    <property type="entry name" value="Ribosomal_uS19_CS"/>
</dbReference>
<dbReference type="InterPro" id="IPR023575">
    <property type="entry name" value="Ribosomal_uS19_SF"/>
</dbReference>
<dbReference type="NCBIfam" id="TIGR01050">
    <property type="entry name" value="rpsS_bact"/>
    <property type="match status" value="1"/>
</dbReference>
<dbReference type="PANTHER" id="PTHR11880">
    <property type="entry name" value="RIBOSOMAL PROTEIN S19P FAMILY MEMBER"/>
    <property type="match status" value="1"/>
</dbReference>
<dbReference type="PANTHER" id="PTHR11880:SF8">
    <property type="entry name" value="SMALL RIBOSOMAL SUBUNIT PROTEIN US19M"/>
    <property type="match status" value="1"/>
</dbReference>
<dbReference type="Pfam" id="PF00203">
    <property type="entry name" value="Ribosomal_S19"/>
    <property type="match status" value="1"/>
</dbReference>
<dbReference type="PIRSF" id="PIRSF002144">
    <property type="entry name" value="Ribosomal_S19"/>
    <property type="match status" value="1"/>
</dbReference>
<dbReference type="PRINTS" id="PR00975">
    <property type="entry name" value="RIBOSOMALS19"/>
</dbReference>
<dbReference type="SUPFAM" id="SSF54570">
    <property type="entry name" value="Ribosomal protein S19"/>
    <property type="match status" value="1"/>
</dbReference>
<dbReference type="PROSITE" id="PS00323">
    <property type="entry name" value="RIBOSOMAL_S19"/>
    <property type="match status" value="1"/>
</dbReference>